<name>MINE_LACP7</name>
<sequence length="90" mass="9903">MALMDFFKKKASGSVAKDRLKLVLVSDRAGCSPEIMEQIKNDIIAVISKYIVIDQEGLDIKITQTESEGNNGNVPALFANIPIKDLKHSK</sequence>
<reference key="1">
    <citation type="submission" date="2007-11" db="EMBL/GenBank/DDBJ databases">
        <title>Complete genome sequence of Clostridium phytofermentans ISDg.</title>
        <authorList>
            <person name="Leschine S.B."/>
            <person name="Warnick T.A."/>
            <person name="Blanchard J.L."/>
            <person name="Schnell D.J."/>
            <person name="Petit E.L."/>
            <person name="LaTouf W.G."/>
            <person name="Copeland A."/>
            <person name="Lucas S."/>
            <person name="Lapidus A."/>
            <person name="Barry K."/>
            <person name="Glavina del Rio T."/>
            <person name="Dalin E."/>
            <person name="Tice H."/>
            <person name="Pitluck S."/>
            <person name="Kiss H."/>
            <person name="Brettin T."/>
            <person name="Bruce D."/>
            <person name="Detter J.C."/>
            <person name="Han C."/>
            <person name="Kuske C."/>
            <person name="Schmutz J."/>
            <person name="Larimer F."/>
            <person name="Land M."/>
            <person name="Hauser L."/>
            <person name="Kyrpides N."/>
            <person name="Kim E.A."/>
            <person name="Richardson P."/>
        </authorList>
    </citation>
    <scope>NUCLEOTIDE SEQUENCE [LARGE SCALE GENOMIC DNA]</scope>
    <source>
        <strain>ATCC 700394 / DSM 18823 / ISDg</strain>
    </source>
</reference>
<evidence type="ECO:0000255" key="1">
    <source>
        <dbReference type="HAMAP-Rule" id="MF_00262"/>
    </source>
</evidence>
<dbReference type="EMBL" id="CP000885">
    <property type="protein sequence ID" value="ABX42730.1"/>
    <property type="molecule type" value="Genomic_DNA"/>
</dbReference>
<dbReference type="RefSeq" id="WP_012200384.1">
    <property type="nucleotide sequence ID" value="NC_010001.1"/>
</dbReference>
<dbReference type="STRING" id="357809.Cphy_2369"/>
<dbReference type="KEGG" id="cpy:Cphy_2369"/>
<dbReference type="eggNOG" id="COG0851">
    <property type="taxonomic scope" value="Bacteria"/>
</dbReference>
<dbReference type="HOGENOM" id="CLU_137929_1_0_9"/>
<dbReference type="OrthoDB" id="9796578at2"/>
<dbReference type="Proteomes" id="UP000000370">
    <property type="component" value="Chromosome"/>
</dbReference>
<dbReference type="GO" id="GO:0051301">
    <property type="term" value="P:cell division"/>
    <property type="evidence" value="ECO:0007669"/>
    <property type="project" value="UniProtKB-KW"/>
</dbReference>
<dbReference type="GO" id="GO:0032955">
    <property type="term" value="P:regulation of division septum assembly"/>
    <property type="evidence" value="ECO:0007669"/>
    <property type="project" value="InterPro"/>
</dbReference>
<dbReference type="Gene3D" id="3.30.1070.10">
    <property type="entry name" value="Cell division topological specificity factor MinE"/>
    <property type="match status" value="1"/>
</dbReference>
<dbReference type="HAMAP" id="MF_00262">
    <property type="entry name" value="MinE"/>
    <property type="match status" value="1"/>
</dbReference>
<dbReference type="InterPro" id="IPR005527">
    <property type="entry name" value="MinE"/>
</dbReference>
<dbReference type="InterPro" id="IPR036707">
    <property type="entry name" value="MinE_sf"/>
</dbReference>
<dbReference type="NCBIfam" id="TIGR01215">
    <property type="entry name" value="minE"/>
    <property type="match status" value="1"/>
</dbReference>
<dbReference type="NCBIfam" id="NF001422">
    <property type="entry name" value="PRK00296.1"/>
    <property type="match status" value="1"/>
</dbReference>
<dbReference type="Pfam" id="PF03776">
    <property type="entry name" value="MinE"/>
    <property type="match status" value="1"/>
</dbReference>
<dbReference type="SUPFAM" id="SSF55229">
    <property type="entry name" value="Cell division protein MinE topological specificity domain"/>
    <property type="match status" value="1"/>
</dbReference>
<proteinExistence type="inferred from homology"/>
<keyword id="KW-0131">Cell cycle</keyword>
<keyword id="KW-0132">Cell division</keyword>
<keyword id="KW-1185">Reference proteome</keyword>
<comment type="function">
    <text evidence="1">Prevents the cell division inhibition by proteins MinC and MinD at internal division sites while permitting inhibition at polar sites. This ensures cell division at the proper site by restricting the formation of a division septum at the midpoint of the long axis of the cell.</text>
</comment>
<comment type="similarity">
    <text evidence="1">Belongs to the MinE family.</text>
</comment>
<gene>
    <name evidence="1" type="primary">minE</name>
    <name type="ordered locus">Cphy_2369</name>
</gene>
<organism>
    <name type="scientific">Lachnoclostridium phytofermentans (strain ATCC 700394 / DSM 18823 / ISDg)</name>
    <name type="common">Clostridium phytofermentans</name>
    <dbReference type="NCBI Taxonomy" id="357809"/>
    <lineage>
        <taxon>Bacteria</taxon>
        <taxon>Bacillati</taxon>
        <taxon>Bacillota</taxon>
        <taxon>Clostridia</taxon>
        <taxon>Lachnospirales</taxon>
        <taxon>Lachnospiraceae</taxon>
    </lineage>
</organism>
<accession>A9KKZ8</accession>
<feature type="chain" id="PRO_1000078635" description="Cell division topological specificity factor">
    <location>
        <begin position="1"/>
        <end position="90"/>
    </location>
</feature>
<protein>
    <recommendedName>
        <fullName evidence="1">Cell division topological specificity factor</fullName>
    </recommendedName>
</protein>